<sequence>MAKELNPTENIEKLSDIQRYVTQERGTEAPFTGKLLHNKRDGVYQCLCCHQPLFISESKFDSGCGWPSFYQPIDADSIRYIDDYSHNMHRIEIRCGNCDAHLGHVFPDGPQPTGERYCINSASLNFVDDQNGEQTAG</sequence>
<comment type="catalytic activity">
    <reaction evidence="1">
        <text>L-methionyl-[protein] + [thioredoxin]-disulfide + H2O = L-methionyl-(R)-S-oxide-[protein] + [thioredoxin]-dithiol</text>
        <dbReference type="Rhea" id="RHEA:24164"/>
        <dbReference type="Rhea" id="RHEA-COMP:10698"/>
        <dbReference type="Rhea" id="RHEA-COMP:10700"/>
        <dbReference type="Rhea" id="RHEA-COMP:12313"/>
        <dbReference type="Rhea" id="RHEA-COMP:12314"/>
        <dbReference type="ChEBI" id="CHEBI:15377"/>
        <dbReference type="ChEBI" id="CHEBI:16044"/>
        <dbReference type="ChEBI" id="CHEBI:29950"/>
        <dbReference type="ChEBI" id="CHEBI:45764"/>
        <dbReference type="ChEBI" id="CHEBI:50058"/>
        <dbReference type="EC" id="1.8.4.12"/>
    </reaction>
</comment>
<comment type="cofactor">
    <cofactor evidence="1">
        <name>Zn(2+)</name>
        <dbReference type="ChEBI" id="CHEBI:29105"/>
    </cofactor>
    <text evidence="1">Binds 1 zinc ion per subunit. The zinc ion is important for the structural integrity of the protein.</text>
</comment>
<comment type="similarity">
    <text evidence="1">Belongs to the MsrB Met sulfoxide reductase family.</text>
</comment>
<protein>
    <recommendedName>
        <fullName evidence="1">Peptide methionine sulfoxide reductase MsrB</fullName>
        <ecNumber evidence="1">1.8.4.12</ecNumber>
    </recommendedName>
    <alternativeName>
        <fullName evidence="1">Peptide-methionine (R)-S-oxide reductase</fullName>
    </alternativeName>
</protein>
<evidence type="ECO:0000255" key="1">
    <source>
        <dbReference type="HAMAP-Rule" id="MF_01400"/>
    </source>
</evidence>
<evidence type="ECO:0000255" key="2">
    <source>
        <dbReference type="PROSITE-ProRule" id="PRU01126"/>
    </source>
</evidence>
<organism>
    <name type="scientific">Yersinia pseudotuberculosis serotype O:1b (strain IP 31758)</name>
    <dbReference type="NCBI Taxonomy" id="349747"/>
    <lineage>
        <taxon>Bacteria</taxon>
        <taxon>Pseudomonadati</taxon>
        <taxon>Pseudomonadota</taxon>
        <taxon>Gammaproteobacteria</taxon>
        <taxon>Enterobacterales</taxon>
        <taxon>Yersiniaceae</taxon>
        <taxon>Yersinia</taxon>
    </lineage>
</organism>
<reference key="1">
    <citation type="journal article" date="2007" name="PLoS Genet.">
        <title>The complete genome sequence of Yersinia pseudotuberculosis IP31758, the causative agent of Far East scarlet-like fever.</title>
        <authorList>
            <person name="Eppinger M."/>
            <person name="Rosovitz M.J."/>
            <person name="Fricke W.F."/>
            <person name="Rasko D.A."/>
            <person name="Kokorina G."/>
            <person name="Fayolle C."/>
            <person name="Lindler L.E."/>
            <person name="Carniel E."/>
            <person name="Ravel J."/>
        </authorList>
    </citation>
    <scope>NUCLEOTIDE SEQUENCE [LARGE SCALE GENOMIC DNA]</scope>
    <source>
        <strain>IP 31758</strain>
    </source>
</reference>
<dbReference type="EC" id="1.8.4.12" evidence="1"/>
<dbReference type="EMBL" id="CP000720">
    <property type="protein sequence ID" value="ABS49334.1"/>
    <property type="molecule type" value="Genomic_DNA"/>
</dbReference>
<dbReference type="RefSeq" id="WP_002211677.1">
    <property type="nucleotide sequence ID" value="NC_009708.1"/>
</dbReference>
<dbReference type="SMR" id="A7FI81"/>
<dbReference type="GeneID" id="57976510"/>
<dbReference type="KEGG" id="ypi:YpsIP31758_1986"/>
<dbReference type="HOGENOM" id="CLU_031040_8_5_6"/>
<dbReference type="Proteomes" id="UP000002412">
    <property type="component" value="Chromosome"/>
</dbReference>
<dbReference type="GO" id="GO:0005737">
    <property type="term" value="C:cytoplasm"/>
    <property type="evidence" value="ECO:0007669"/>
    <property type="project" value="TreeGrafter"/>
</dbReference>
<dbReference type="GO" id="GO:0033743">
    <property type="term" value="F:peptide-methionine (R)-S-oxide reductase activity"/>
    <property type="evidence" value="ECO:0007669"/>
    <property type="project" value="UniProtKB-UniRule"/>
</dbReference>
<dbReference type="GO" id="GO:0008270">
    <property type="term" value="F:zinc ion binding"/>
    <property type="evidence" value="ECO:0007669"/>
    <property type="project" value="UniProtKB-UniRule"/>
</dbReference>
<dbReference type="GO" id="GO:0030091">
    <property type="term" value="P:protein repair"/>
    <property type="evidence" value="ECO:0007669"/>
    <property type="project" value="InterPro"/>
</dbReference>
<dbReference type="GO" id="GO:0006979">
    <property type="term" value="P:response to oxidative stress"/>
    <property type="evidence" value="ECO:0007669"/>
    <property type="project" value="InterPro"/>
</dbReference>
<dbReference type="FunFam" id="2.170.150.20:FF:000001">
    <property type="entry name" value="Peptide methionine sulfoxide reductase MsrB"/>
    <property type="match status" value="1"/>
</dbReference>
<dbReference type="Gene3D" id="2.170.150.20">
    <property type="entry name" value="Peptide methionine sulfoxide reductase"/>
    <property type="match status" value="1"/>
</dbReference>
<dbReference type="HAMAP" id="MF_01400">
    <property type="entry name" value="MsrB"/>
    <property type="match status" value="1"/>
</dbReference>
<dbReference type="InterPro" id="IPR028427">
    <property type="entry name" value="Met_Sox_Rdtase_MsrB"/>
</dbReference>
<dbReference type="InterPro" id="IPR002579">
    <property type="entry name" value="Met_Sox_Rdtase_MsrB_dom"/>
</dbReference>
<dbReference type="InterPro" id="IPR011057">
    <property type="entry name" value="Mss4-like_sf"/>
</dbReference>
<dbReference type="NCBIfam" id="TIGR00357">
    <property type="entry name" value="peptide-methionine (R)-S-oxide reductase MsrB"/>
    <property type="match status" value="1"/>
</dbReference>
<dbReference type="PANTHER" id="PTHR10173">
    <property type="entry name" value="METHIONINE SULFOXIDE REDUCTASE"/>
    <property type="match status" value="1"/>
</dbReference>
<dbReference type="PANTHER" id="PTHR10173:SF52">
    <property type="entry name" value="METHIONINE-R-SULFOXIDE REDUCTASE B1"/>
    <property type="match status" value="1"/>
</dbReference>
<dbReference type="Pfam" id="PF01641">
    <property type="entry name" value="SelR"/>
    <property type="match status" value="1"/>
</dbReference>
<dbReference type="SUPFAM" id="SSF51316">
    <property type="entry name" value="Mss4-like"/>
    <property type="match status" value="1"/>
</dbReference>
<dbReference type="PROSITE" id="PS51790">
    <property type="entry name" value="MSRB"/>
    <property type="match status" value="1"/>
</dbReference>
<keyword id="KW-0479">Metal-binding</keyword>
<keyword id="KW-0560">Oxidoreductase</keyword>
<keyword id="KW-0862">Zinc</keyword>
<accession>A7FI81</accession>
<proteinExistence type="inferred from homology"/>
<gene>
    <name evidence="1" type="primary">msrB</name>
    <name type="ordered locus">YpsIP31758_1986</name>
</gene>
<feature type="chain" id="PRO_1000068301" description="Peptide methionine sulfoxide reductase MsrB">
    <location>
        <begin position="1"/>
        <end position="137"/>
    </location>
</feature>
<feature type="domain" description="MsrB" evidence="2">
    <location>
        <begin position="7"/>
        <end position="129"/>
    </location>
</feature>
<feature type="active site" description="Nucleophile" evidence="2">
    <location>
        <position position="118"/>
    </location>
</feature>
<feature type="binding site" evidence="2">
    <location>
        <position position="46"/>
    </location>
    <ligand>
        <name>Zn(2+)</name>
        <dbReference type="ChEBI" id="CHEBI:29105"/>
    </ligand>
</feature>
<feature type="binding site" evidence="2">
    <location>
        <position position="49"/>
    </location>
    <ligand>
        <name>Zn(2+)</name>
        <dbReference type="ChEBI" id="CHEBI:29105"/>
    </ligand>
</feature>
<feature type="binding site" evidence="2">
    <location>
        <position position="95"/>
    </location>
    <ligand>
        <name>Zn(2+)</name>
        <dbReference type="ChEBI" id="CHEBI:29105"/>
    </ligand>
</feature>
<feature type="binding site" evidence="2">
    <location>
        <position position="98"/>
    </location>
    <ligand>
        <name>Zn(2+)</name>
        <dbReference type="ChEBI" id="CHEBI:29105"/>
    </ligand>
</feature>
<name>MSRB_YERP3</name>